<gene>
    <name evidence="2" type="primary">mig-23</name>
    <name type="ORF">CBG14784</name>
</gene>
<accession>Q617Y0</accession>
<accession>A8XKN6</accession>
<protein>
    <recommendedName>
        <fullName>Nucleoside-diphosphatase mig-23</fullName>
        <shortName>NDPase</shortName>
        <ecNumber>3.6.1.6</ecNumber>
    </recommendedName>
    <alternativeName>
        <fullName>Abnormal cell migration protein 23</fullName>
    </alternativeName>
</protein>
<proteinExistence type="inferred from homology"/>
<sequence>MRVSRRFTILAITAMIFLSLIICIYAVAAHTTVNVILQKQERSYGVICDAGSTGTRLFVYNWVSTSDSELIQIEPVIYDNKPVMKKISPGLSTFGTKPDEAAEYLRPLMELAELHIPEEKRPYTPVFIFATAGMRLIPDEQKEAVLTNLRTELPKITSMQVLKEHIRIIEGKWEGIYSWIAVNYALGKFNRTFTPDFPGTSPGQQRSKTVGMIDMGGASAQIAFELPDNDDFNSINVENINLGCREDDSLFRYKLFVTTFLGYGVNEGIRKYEKTLMAKLKDQNGTVIQDDCMPLNLHKTVTMENGDNFVRRGTGNWDTCAAEVKKLLNPETSSEVCKAEVAKCYFGAVPAPNIPLSNVEMYGFSEYWYSTHDVLGLGGQYNAENIAKKSEQYCGQRWSTIQAASKKNLYPRADEERLKTQCFKSAWITSVLHDGFSVDKTHNKFQSVSTIAGQEVQWALGAMIYHMRFFPLRDSTRNLIVKETHSASESLWAPLFFLSAVFCLFVLVCAKEHSLLCFDDKRRASFGLTRRQYSYKMLKEDRTSSSAFLENFA</sequence>
<name>MIG23_CAEBR</name>
<reference key="1">
    <citation type="journal article" date="2003" name="PLoS Biol.">
        <title>The genome sequence of Caenorhabditis briggsae: a platform for comparative genomics.</title>
        <authorList>
            <person name="Stein L.D."/>
            <person name="Bao Z."/>
            <person name="Blasiar D."/>
            <person name="Blumenthal T."/>
            <person name="Brent M.R."/>
            <person name="Chen N."/>
            <person name="Chinwalla A."/>
            <person name="Clarke L."/>
            <person name="Clee C."/>
            <person name="Coghlan A."/>
            <person name="Coulson A."/>
            <person name="D'Eustachio P."/>
            <person name="Fitch D.H.A."/>
            <person name="Fulton L.A."/>
            <person name="Fulton R.E."/>
            <person name="Griffiths-Jones S."/>
            <person name="Harris T.W."/>
            <person name="Hillier L.W."/>
            <person name="Kamath R."/>
            <person name="Kuwabara P.E."/>
            <person name="Mardis E.R."/>
            <person name="Marra M.A."/>
            <person name="Miner T.L."/>
            <person name="Minx P."/>
            <person name="Mullikin J.C."/>
            <person name="Plumb R.W."/>
            <person name="Rogers J."/>
            <person name="Schein J.E."/>
            <person name="Sohrmann M."/>
            <person name="Spieth J."/>
            <person name="Stajich J.E."/>
            <person name="Wei C."/>
            <person name="Willey D."/>
            <person name="Wilson R.K."/>
            <person name="Durbin R.M."/>
            <person name="Waterston R.H."/>
        </authorList>
    </citation>
    <scope>NUCLEOTIDE SEQUENCE [LARGE SCALE GENOMIC DNA]</scope>
    <source>
        <strain>AF16</strain>
    </source>
</reference>
<feature type="chain" id="PRO_0000298775" description="Nucleoside-diphosphatase mig-23">
    <location>
        <begin position="1"/>
        <end position="553"/>
    </location>
</feature>
<feature type="topological domain" description="Cytoplasmic" evidence="3">
    <location>
        <begin position="1"/>
        <end position="8"/>
    </location>
</feature>
<feature type="transmembrane region" description="Helical" evidence="3">
    <location>
        <begin position="9"/>
        <end position="29"/>
    </location>
</feature>
<feature type="topological domain" description="Lumenal" evidence="3">
    <location>
        <begin position="30"/>
        <end position="489"/>
    </location>
</feature>
<feature type="transmembrane region" description="Helical" evidence="3">
    <location>
        <begin position="490"/>
        <end position="510"/>
    </location>
</feature>
<feature type="topological domain" description="Cytoplasmic" evidence="3">
    <location>
        <begin position="511"/>
        <end position="553"/>
    </location>
</feature>
<feature type="active site" description="Proton acceptor" evidence="1">
    <location>
        <position position="174"/>
    </location>
</feature>
<feature type="glycosylation site" description="N-linked (GlcNAc...) asparagine" evidence="3">
    <location>
        <position position="190"/>
    </location>
</feature>
<feature type="glycosylation site" description="N-linked (GlcNAc...) asparagine" evidence="3">
    <location>
        <position position="284"/>
    </location>
</feature>
<organism>
    <name type="scientific">Caenorhabditis briggsae</name>
    <dbReference type="NCBI Taxonomy" id="6238"/>
    <lineage>
        <taxon>Eukaryota</taxon>
        <taxon>Metazoa</taxon>
        <taxon>Ecdysozoa</taxon>
        <taxon>Nematoda</taxon>
        <taxon>Chromadorea</taxon>
        <taxon>Rhabditida</taxon>
        <taxon>Rhabditina</taxon>
        <taxon>Rhabditomorpha</taxon>
        <taxon>Rhabditoidea</taxon>
        <taxon>Rhabditidae</taxon>
        <taxon>Peloderinae</taxon>
        <taxon>Caenorhabditis</taxon>
    </lineage>
</organism>
<keyword id="KW-0217">Developmental protein</keyword>
<keyword id="KW-0221">Differentiation</keyword>
<keyword id="KW-0325">Glycoprotein</keyword>
<keyword id="KW-0333">Golgi apparatus</keyword>
<keyword id="KW-0334">Gonadal differentiation</keyword>
<keyword id="KW-0378">Hydrolase</keyword>
<keyword id="KW-0472">Membrane</keyword>
<keyword id="KW-1185">Reference proteome</keyword>
<keyword id="KW-0812">Transmembrane</keyword>
<keyword id="KW-1133">Transmembrane helix</keyword>
<evidence type="ECO:0000250" key="1"/>
<evidence type="ECO:0000250" key="2">
    <source>
        <dbReference type="UniProtKB" id="Q21815"/>
    </source>
</evidence>
<evidence type="ECO:0000255" key="3"/>
<dbReference type="EC" id="3.6.1.6"/>
<dbReference type="EMBL" id="HE600983">
    <property type="protein sequence ID" value="CAP33210.3"/>
    <property type="molecule type" value="Genomic_DNA"/>
</dbReference>
<dbReference type="SMR" id="Q617Y0"/>
<dbReference type="FunCoup" id="Q617Y0">
    <property type="interactions" value="1766"/>
</dbReference>
<dbReference type="STRING" id="6238.Q617Y0"/>
<dbReference type="GlyCosmos" id="Q617Y0">
    <property type="glycosylation" value="2 sites, No reported glycans"/>
</dbReference>
<dbReference type="EnsemblMetazoa" id="CBG14784.1">
    <property type="protein sequence ID" value="CBG14784.1"/>
    <property type="gene ID" value="WBGene00035179"/>
</dbReference>
<dbReference type="KEGG" id="cbr:CBG_14784"/>
<dbReference type="CTD" id="8586767"/>
<dbReference type="WormBase" id="CBG14784">
    <property type="protein sequence ID" value="CBP03461"/>
    <property type="gene ID" value="WBGene00035179"/>
    <property type="gene designation" value="Cbr-mig-23"/>
</dbReference>
<dbReference type="eggNOG" id="KOG1386">
    <property type="taxonomic scope" value="Eukaryota"/>
</dbReference>
<dbReference type="HOGENOM" id="CLU_010246_6_1_1"/>
<dbReference type="InParanoid" id="Q617Y0"/>
<dbReference type="OMA" id="ENPFHRH"/>
<dbReference type="Proteomes" id="UP000008549">
    <property type="component" value="Unassembled WGS sequence"/>
</dbReference>
<dbReference type="GO" id="GO:0005794">
    <property type="term" value="C:Golgi apparatus"/>
    <property type="evidence" value="ECO:0000318"/>
    <property type="project" value="GO_Central"/>
</dbReference>
<dbReference type="GO" id="GO:0000139">
    <property type="term" value="C:Golgi membrane"/>
    <property type="evidence" value="ECO:0007669"/>
    <property type="project" value="UniProtKB-SubCell"/>
</dbReference>
<dbReference type="GO" id="GO:0016020">
    <property type="term" value="C:membrane"/>
    <property type="evidence" value="ECO:0000318"/>
    <property type="project" value="GO_Central"/>
</dbReference>
<dbReference type="GO" id="GO:0043262">
    <property type="term" value="F:ADP phosphatase activity"/>
    <property type="evidence" value="ECO:0007669"/>
    <property type="project" value="EnsemblMetazoa"/>
</dbReference>
<dbReference type="GO" id="GO:0004382">
    <property type="term" value="F:GDP phosphatase activity"/>
    <property type="evidence" value="ECO:0000318"/>
    <property type="project" value="GO_Central"/>
</dbReference>
<dbReference type="GO" id="GO:0017111">
    <property type="term" value="F:ribonucleoside triphosphate phosphatase activity"/>
    <property type="evidence" value="ECO:0000318"/>
    <property type="project" value="GO_Central"/>
</dbReference>
<dbReference type="GO" id="GO:0045134">
    <property type="term" value="F:UDP phosphatase activity"/>
    <property type="evidence" value="ECO:0000318"/>
    <property type="project" value="GO_Central"/>
</dbReference>
<dbReference type="GO" id="GO:0046032">
    <property type="term" value="P:ADP catabolic process"/>
    <property type="evidence" value="ECO:0007669"/>
    <property type="project" value="EnsemblMetazoa"/>
</dbReference>
<dbReference type="GO" id="GO:0030154">
    <property type="term" value="P:cell differentiation"/>
    <property type="evidence" value="ECO:0007669"/>
    <property type="project" value="UniProtKB-KW"/>
</dbReference>
<dbReference type="GO" id="GO:0046036">
    <property type="term" value="P:CTP metabolic process"/>
    <property type="evidence" value="ECO:0000318"/>
    <property type="project" value="GO_Central"/>
</dbReference>
<dbReference type="GO" id="GO:0046712">
    <property type="term" value="P:GDP catabolic process"/>
    <property type="evidence" value="ECO:0007669"/>
    <property type="project" value="EnsemblMetazoa"/>
</dbReference>
<dbReference type="GO" id="GO:0035262">
    <property type="term" value="P:gonad morphogenesis"/>
    <property type="evidence" value="ECO:0007669"/>
    <property type="project" value="EnsemblMetazoa"/>
</dbReference>
<dbReference type="GO" id="GO:0007506">
    <property type="term" value="P:gonadal mesoderm development"/>
    <property type="evidence" value="ECO:0007669"/>
    <property type="project" value="UniProtKB-KW"/>
</dbReference>
<dbReference type="GO" id="GO:0060050">
    <property type="term" value="P:positive regulation of protein glycosylation"/>
    <property type="evidence" value="ECO:0007669"/>
    <property type="project" value="EnsemblMetazoa"/>
</dbReference>
<dbReference type="GO" id="GO:0030334">
    <property type="term" value="P:regulation of cell migration"/>
    <property type="evidence" value="ECO:0007669"/>
    <property type="project" value="EnsemblMetazoa"/>
</dbReference>
<dbReference type="GO" id="GO:0006256">
    <property type="term" value="P:UDP catabolic process"/>
    <property type="evidence" value="ECO:0000318"/>
    <property type="project" value="GO_Central"/>
</dbReference>
<dbReference type="CDD" id="cd24045">
    <property type="entry name" value="ASKHA_NBD_NTPDase4-like"/>
    <property type="match status" value="1"/>
</dbReference>
<dbReference type="FunFam" id="3.30.420.40:FF:000057">
    <property type="entry name" value="Ectonucleoside triphosphate diphosphohydrolase 4"/>
    <property type="match status" value="1"/>
</dbReference>
<dbReference type="FunFam" id="3.30.420.150:FF:000003">
    <property type="entry name" value="ectonucleoside triphosphate diphosphohydrolase 7"/>
    <property type="match status" value="1"/>
</dbReference>
<dbReference type="Gene3D" id="3.30.420.40">
    <property type="match status" value="1"/>
</dbReference>
<dbReference type="Gene3D" id="3.30.420.150">
    <property type="entry name" value="Exopolyphosphatase. Domain 2"/>
    <property type="match status" value="1"/>
</dbReference>
<dbReference type="InterPro" id="IPR000407">
    <property type="entry name" value="GDA1_CD39_NTPase"/>
</dbReference>
<dbReference type="PANTHER" id="PTHR11782">
    <property type="entry name" value="ADENOSINE/GUANOSINE DIPHOSPHATASE"/>
    <property type="match status" value="1"/>
</dbReference>
<dbReference type="PANTHER" id="PTHR11782:SF121">
    <property type="entry name" value="NUCLEOSIDE-DIPHOSPHATASE MIG-23"/>
    <property type="match status" value="1"/>
</dbReference>
<dbReference type="Pfam" id="PF01150">
    <property type="entry name" value="GDA1_CD39"/>
    <property type="match status" value="1"/>
</dbReference>
<dbReference type="PROSITE" id="PS01238">
    <property type="entry name" value="GDA1_CD39_NTPASE"/>
    <property type="match status" value="1"/>
</dbReference>
<comment type="function">
    <text evidence="2">Seems to be able to hydrolyze ADP, UDP and GDP. Supports mig-17 glycosylation and surface expression, which is required for proper migration of distal tip cells during gonad morphogenesis (By similarity).</text>
</comment>
<comment type="catalytic activity">
    <reaction>
        <text>a ribonucleoside 5'-diphosphate + H2O = a ribonucleoside 5'-phosphate + phosphate + H(+)</text>
        <dbReference type="Rhea" id="RHEA:36799"/>
        <dbReference type="ChEBI" id="CHEBI:15377"/>
        <dbReference type="ChEBI" id="CHEBI:15378"/>
        <dbReference type="ChEBI" id="CHEBI:43474"/>
        <dbReference type="ChEBI" id="CHEBI:57930"/>
        <dbReference type="ChEBI" id="CHEBI:58043"/>
        <dbReference type="EC" id="3.6.1.6"/>
    </reaction>
</comment>
<comment type="subcellular location">
    <subcellularLocation>
        <location evidence="2">Golgi apparatus membrane</location>
        <topology evidence="2">Multi-pass membrane protein</topology>
    </subcellularLocation>
</comment>
<comment type="similarity">
    <text evidence="3">Belongs to the GDA1/CD39 NTPase family.</text>
</comment>